<feature type="chain" id="PRO_0000460853" description="Chitin synthase E">
    <location>
        <begin position="1" status="less than"/>
        <end position="1752"/>
    </location>
</feature>
<feature type="transmembrane region" description="Helical" evidence="2">
    <location>
        <begin position="789"/>
        <end position="809"/>
    </location>
</feature>
<feature type="transmembrane region" description="Helical" evidence="2">
    <location>
        <begin position="828"/>
        <end position="848"/>
    </location>
</feature>
<feature type="transmembrane region" description="Helical" evidence="2">
    <location>
        <begin position="1099"/>
        <end position="1119"/>
    </location>
</feature>
<feature type="transmembrane region" description="Helical" evidence="2">
    <location>
        <begin position="1494"/>
        <end position="1514"/>
    </location>
</feature>
<feature type="transmembrane region" description="Helical" evidence="2">
    <location>
        <begin position="1520"/>
        <end position="1540"/>
    </location>
</feature>
<feature type="transmembrane region" description="Helical" evidence="2">
    <location>
        <begin position="1547"/>
        <end position="1567"/>
    </location>
</feature>
<feature type="domain" description="Cytochrome b5 heme-binding" evidence="3">
    <location>
        <begin position="852"/>
        <end position="940"/>
    </location>
</feature>
<feature type="domain" description="DEK-C" evidence="6">
    <location>
        <begin position="1689"/>
        <end position="1744"/>
    </location>
</feature>
<feature type="region of interest" description="Disordered" evidence="7">
    <location>
        <begin position="492"/>
        <end position="520"/>
    </location>
</feature>
<feature type="region of interest" description="Actin-binding" evidence="5">
    <location>
        <begin position="558"/>
        <end position="582"/>
    </location>
</feature>
<feature type="binding site" evidence="5">
    <location>
        <begin position="1"/>
        <end position="8"/>
    </location>
    <ligand>
        <name>ATP</name>
        <dbReference type="ChEBI" id="CHEBI:30616"/>
    </ligand>
</feature>
<feature type="glycosylation site" description="N-linked (GlcNAc...) asparagine" evidence="4">
    <location>
        <position position="938"/>
    </location>
</feature>
<feature type="glycosylation site" description="N-linked (GlcNAc...) asparagine" evidence="4">
    <location>
        <position position="963"/>
    </location>
</feature>
<feature type="glycosylation site" description="N-linked (GlcNAc...) asparagine" evidence="4">
    <location>
        <position position="1322"/>
    </location>
</feature>
<feature type="glycosylation site" description="N-linked (GlcNAc...) asparagine" evidence="4">
    <location>
        <position position="1356"/>
    </location>
</feature>
<feature type="glycosylation site" description="N-linked (GlcNAc...) asparagine" evidence="4">
    <location>
        <position position="1462"/>
    </location>
</feature>
<feature type="glycosylation site" description="N-linked (GlcNAc...) asparagine" evidence="4">
    <location>
        <position position="1685"/>
    </location>
</feature>
<feature type="non-terminal residue">
    <location>
        <position position="1"/>
    </location>
</feature>
<name>CHS5_ASPFM</name>
<keyword id="KW-0009">Actin-binding</keyword>
<keyword id="KW-0067">ATP-binding</keyword>
<keyword id="KW-1003">Cell membrane</keyword>
<keyword id="KW-0325">Glycoprotein</keyword>
<keyword id="KW-0328">Glycosyltransferase</keyword>
<keyword id="KW-0472">Membrane</keyword>
<keyword id="KW-0505">Motor protein</keyword>
<keyword id="KW-0518">Myosin</keyword>
<keyword id="KW-0547">Nucleotide-binding</keyword>
<keyword id="KW-0808">Transferase</keyword>
<keyword id="KW-0812">Transmembrane</keyword>
<keyword id="KW-1133">Transmembrane helix</keyword>
<sequence>GESGSGKTTIRSHLLSAFLSFSSTPLSSKLSYAAFLFDTLTTTKSLTTQTASKAGLFLELQYDGSSSVNPTLIGGKIIDHRLERSRITSVPTGERSFHVLYYLLAGTSPAEKAHLGFDKAVHVSTSSGAIGHKRWRYLGHPTQLKVGVNDVEGFQHFKTALRKLEFPRSEIAEICQILATILHIGQLEFASGQATTTHAEESGGYSHEGGETVTIVKNKDVLSIIAAFLGLSVEDLENSFGYRTKTIHRERVTVMLDPKGARQNADELARTIYSLLVAYVIEAVNQRICAAEDSVANTISIVDFPGFAQACATGSTLDQLFNNAATELLYNFCLQSFFDRKADELEREEVSVPATSYFDNTDAVRGLLKHGNGLLSILDDQTRRGRTDNQLLESLRRRFENKNPTIIVEGSKRTSLISQNARSAFTVKHFAGEIDYSVNGLIEENGEFISGDLMRLMKSTKSDFVRELFGQAALQTVTHPKEKTAIMQAQVSSKPLRMPSMARRKTSPSSRLAFDAGDADEVESQAESIAKDSSSGRRKSAMLTSGIQGAAGQFLSSLDIVNKCLSSTNLNPYFIFCLKPNDRRIANQFDSKCVRAQVQMFGIAEISQRLRNADFSVFLPFAEFLGLAEIGNIVVVGSDKEKAEVVLDEKRWPGNEARVGSTGVFLSERCWADLAKVGERVVPVYAADMSDEGGDGLLHPRSTGYGDSKVRLLNPADQSPGAFIYGDEAKQGYFGSRDLDGRSDAGNSAFNSGDMFRNHETREQMLEKGNEKKMEEVDDAPISGSRKRWIALVYLLTFYIPDFAIKLFGRIKRKDVRMAWREKFAINLIIWFSCGVAIFFIVAFPGLVCPTQHVYSAAELSSHNGKDGHSSFIAIRGVVFDLDKFMPGHYPHIVPESALKKYAGVDATGLFPVQVSALCQGKSGSVDPTVLLDYRPTNISGSATTISGTDTNSVYHDFRHFTNDSRPDWFYEQMVMLKANYLKGYVGYTPKYLNTLGKKSQSIGSINGKVYDLTSYIAGGRLTKAPPGETVPSDVDTDFMDNSVVSLFQSLPGQDLSKHWENLKIDALRRRMQLCLDNLFFVGHVDTRNSAQCEFARYFILAISVLICSIIVFKFLAALQFGRKNVPENLDKFIICQVPAYTEDEESLRRAIDSMARMRYDDKRKLLVVICDGMIIGQGNDRPTPRIVLDILGVPESVDPEPLSFESLGEGQKQHNMGKVYSGLYEVQGHIVPFLVIVKVGKPSEVSRPGNRGKRDSQMVLMKIPERVHYNLPMSPMELEMHHQIRNVIGVNPTFYEFILQVDADTVVAPDSATRMVAAFLNDTRLIGVCGETALTNAKTSAVTMIQVYEYYISHNLTKAFESLFGSVTCLPGCFTMYRIRSAETAKPLFVSKEVVDAYAEIRVDTLHMKNLLHLGEDRYLTTLLLKHHSKYKTKYISSAKAWTIAPESWTVFLSQRRRWINSTVHNLIELIPMQQLCGFCCFSMRFVVFVDLLSTVIQPVTLAYIIYLIYWLVKDTSTIPYTSLILLAAIYGLQALIFIIRRKWEMVGWMIVYLLALPVFSLPCPSTLSGTWTTLPGVTHVSSQERKAGKVVISDEGKFDPASIPKKKWEEYQTELWEAQTSRDDRSEVSGISYGTKSYHPAQSEYGFPGSRPMSQLDLPRFGSRMSLAPSEMMSRHADMEMENLSHLPSDDAILAEIREILRTADLMSVTKKSIKLELERAFGVNLDLKRPYINSGKGYTFPFPVLRTVC</sequence>
<dbReference type="EC" id="2.4.1.16" evidence="14"/>
<dbReference type="EMBL" id="Y09542">
    <property type="protein sequence ID" value="CAA70736.1"/>
    <property type="molecule type" value="Genomic_DNA"/>
</dbReference>
<dbReference type="PIR" id="S78102">
    <property type="entry name" value="S78102"/>
</dbReference>
<dbReference type="SMR" id="P97995"/>
<dbReference type="CAZy" id="GT2">
    <property type="family name" value="Glycosyltransferase Family 2"/>
</dbReference>
<dbReference type="GO" id="GO:0030428">
    <property type="term" value="C:cell septum"/>
    <property type="evidence" value="ECO:0007669"/>
    <property type="project" value="UniProtKB-SubCell"/>
</dbReference>
<dbReference type="GO" id="GO:0051286">
    <property type="term" value="C:cell tip"/>
    <property type="evidence" value="ECO:0007669"/>
    <property type="project" value="UniProtKB-SubCell"/>
</dbReference>
<dbReference type="GO" id="GO:0016459">
    <property type="term" value="C:myosin complex"/>
    <property type="evidence" value="ECO:0007669"/>
    <property type="project" value="UniProtKB-KW"/>
</dbReference>
<dbReference type="GO" id="GO:0005886">
    <property type="term" value="C:plasma membrane"/>
    <property type="evidence" value="ECO:0007669"/>
    <property type="project" value="UniProtKB-SubCell"/>
</dbReference>
<dbReference type="GO" id="GO:0003779">
    <property type="term" value="F:actin binding"/>
    <property type="evidence" value="ECO:0007669"/>
    <property type="project" value="UniProtKB-KW"/>
</dbReference>
<dbReference type="GO" id="GO:0005524">
    <property type="term" value="F:ATP binding"/>
    <property type="evidence" value="ECO:0007669"/>
    <property type="project" value="UniProtKB-KW"/>
</dbReference>
<dbReference type="GO" id="GO:0004100">
    <property type="term" value="F:chitin synthase activity"/>
    <property type="evidence" value="ECO:0007669"/>
    <property type="project" value="UniProtKB-EC"/>
</dbReference>
<dbReference type="GO" id="GO:0003774">
    <property type="term" value="F:cytoskeletal motor activity"/>
    <property type="evidence" value="ECO:0007669"/>
    <property type="project" value="InterPro"/>
</dbReference>
<dbReference type="GO" id="GO:0006031">
    <property type="term" value="P:chitin biosynthetic process"/>
    <property type="evidence" value="ECO:0007669"/>
    <property type="project" value="TreeGrafter"/>
</dbReference>
<dbReference type="GO" id="GO:0031505">
    <property type="term" value="P:fungal-type cell wall organization"/>
    <property type="evidence" value="ECO:0007669"/>
    <property type="project" value="TreeGrafter"/>
</dbReference>
<dbReference type="CDD" id="cd14879">
    <property type="entry name" value="MYSc_Myo17"/>
    <property type="match status" value="1"/>
</dbReference>
<dbReference type="FunFam" id="1.10.10.820:FF:000012">
    <property type="entry name" value="Chitin synthase ChsE"/>
    <property type="match status" value="1"/>
</dbReference>
<dbReference type="FunFam" id="1.20.58.530:FF:000017">
    <property type="entry name" value="Chitin synthase ChsE"/>
    <property type="match status" value="1"/>
</dbReference>
<dbReference type="FunFam" id="3.10.120.10:FF:000019">
    <property type="entry name" value="Chitin synthase ChsE"/>
    <property type="match status" value="1"/>
</dbReference>
<dbReference type="Gene3D" id="1.10.10.820">
    <property type="match status" value="1"/>
</dbReference>
<dbReference type="Gene3D" id="1.20.58.530">
    <property type="match status" value="1"/>
</dbReference>
<dbReference type="Gene3D" id="3.10.120.10">
    <property type="entry name" value="Cytochrome b5-like heme/steroid binding domain"/>
    <property type="match status" value="1"/>
</dbReference>
<dbReference type="Gene3D" id="1.10.10.60">
    <property type="entry name" value="Homeodomain-like"/>
    <property type="match status" value="1"/>
</dbReference>
<dbReference type="Gene3D" id="3.40.850.10">
    <property type="entry name" value="Kinesin motor domain"/>
    <property type="match status" value="1"/>
</dbReference>
<dbReference type="Gene3D" id="1.20.120.720">
    <property type="entry name" value="Myosin VI head, motor domain, U50 subdomain"/>
    <property type="match status" value="1"/>
</dbReference>
<dbReference type="Gene3D" id="3.90.550.10">
    <property type="entry name" value="Spore Coat Polysaccharide Biosynthesis Protein SpsA, Chain A"/>
    <property type="match status" value="1"/>
</dbReference>
<dbReference type="InterPro" id="IPR004835">
    <property type="entry name" value="Chitin_synth"/>
</dbReference>
<dbReference type="InterPro" id="IPR001199">
    <property type="entry name" value="Cyt_B5-like_heme/steroid-bd"/>
</dbReference>
<dbReference type="InterPro" id="IPR036400">
    <property type="entry name" value="Cyt_B5-like_heme/steroid_sf"/>
</dbReference>
<dbReference type="InterPro" id="IPR014876">
    <property type="entry name" value="DEK_C"/>
</dbReference>
<dbReference type="InterPro" id="IPR036961">
    <property type="entry name" value="Kinesin_motor_dom_sf"/>
</dbReference>
<dbReference type="InterPro" id="IPR001609">
    <property type="entry name" value="Myosin_head_motor_dom-like"/>
</dbReference>
<dbReference type="InterPro" id="IPR036037">
    <property type="entry name" value="MYSc_Myo17"/>
</dbReference>
<dbReference type="InterPro" id="IPR029044">
    <property type="entry name" value="Nucleotide-diphossugar_trans"/>
</dbReference>
<dbReference type="InterPro" id="IPR027417">
    <property type="entry name" value="P-loop_NTPase"/>
</dbReference>
<dbReference type="PANTHER" id="PTHR22914">
    <property type="entry name" value="CHITIN SYNTHASE"/>
    <property type="match status" value="1"/>
</dbReference>
<dbReference type="PANTHER" id="PTHR22914:SF45">
    <property type="entry name" value="CHITIN SYNTHASE"/>
    <property type="match status" value="1"/>
</dbReference>
<dbReference type="Pfam" id="PF03142">
    <property type="entry name" value="Chitin_synth_2"/>
    <property type="match status" value="1"/>
</dbReference>
<dbReference type="Pfam" id="PF00173">
    <property type="entry name" value="Cyt-b5"/>
    <property type="match status" value="1"/>
</dbReference>
<dbReference type="Pfam" id="PF08766">
    <property type="entry name" value="DEK_C"/>
    <property type="match status" value="1"/>
</dbReference>
<dbReference type="Pfam" id="PF00063">
    <property type="entry name" value="Myosin_head"/>
    <property type="match status" value="1"/>
</dbReference>
<dbReference type="SMART" id="SM01117">
    <property type="entry name" value="Cyt-b5"/>
    <property type="match status" value="2"/>
</dbReference>
<dbReference type="SMART" id="SM00242">
    <property type="entry name" value="MYSc"/>
    <property type="match status" value="1"/>
</dbReference>
<dbReference type="SUPFAM" id="SSF55856">
    <property type="entry name" value="Cytochrome b5-like heme/steroid binding domain"/>
    <property type="match status" value="1"/>
</dbReference>
<dbReference type="SUPFAM" id="SSF109715">
    <property type="entry name" value="DEK C-terminal domain"/>
    <property type="match status" value="1"/>
</dbReference>
<dbReference type="SUPFAM" id="SSF53448">
    <property type="entry name" value="Nucleotide-diphospho-sugar transferases"/>
    <property type="match status" value="1"/>
</dbReference>
<dbReference type="SUPFAM" id="SSF52540">
    <property type="entry name" value="P-loop containing nucleoside triphosphate hydrolases"/>
    <property type="match status" value="1"/>
</dbReference>
<dbReference type="PROSITE" id="PS50255">
    <property type="entry name" value="CYTOCHROME_B5_2"/>
    <property type="match status" value="1"/>
</dbReference>
<dbReference type="PROSITE" id="PS51998">
    <property type="entry name" value="DEK_C"/>
    <property type="match status" value="1"/>
</dbReference>
<dbReference type="PROSITE" id="PS51456">
    <property type="entry name" value="MYOSIN_MOTOR"/>
    <property type="match status" value="1"/>
</dbReference>
<comment type="function">
    <text evidence="8 10 13">Polymerizes chitin, a structural polymer of the cell wall and septum, by transferring the sugar moiety of UDP-GlcNAc to the non-reducing end of the growing chitin polymer (Probable). Important for hyphal growth and conidiophore development but not pathogenicity (PubMed:12553940, PubMed:9126623).</text>
</comment>
<comment type="catalytic activity">
    <reaction evidence="14">
        <text>[(1-&gt;4)-N-acetyl-beta-D-glucosaminyl](n) + UDP-N-acetyl-alpha-D-glucosamine = [(1-&gt;4)-N-acetyl-beta-D-glucosaminyl](n+1) + UDP + H(+)</text>
        <dbReference type="Rhea" id="RHEA:16637"/>
        <dbReference type="Rhea" id="RHEA-COMP:9593"/>
        <dbReference type="Rhea" id="RHEA-COMP:9595"/>
        <dbReference type="ChEBI" id="CHEBI:15378"/>
        <dbReference type="ChEBI" id="CHEBI:17029"/>
        <dbReference type="ChEBI" id="CHEBI:57705"/>
        <dbReference type="ChEBI" id="CHEBI:58223"/>
        <dbReference type="EC" id="2.4.1.16"/>
    </reaction>
    <physiologicalReaction direction="left-to-right" evidence="14">
        <dbReference type="Rhea" id="RHEA:16638"/>
    </physiologicalReaction>
</comment>
<comment type="subcellular location">
    <subcellularLocation>
        <location evidence="12">Cell membrane</location>
        <topology evidence="2">Multi-pass membrane protein</topology>
    </subcellularLocation>
    <subcellularLocation>
        <location evidence="1">Cell septum</location>
    </subcellularLocation>
    <subcellularLocation>
        <location evidence="1">Cell tip</location>
    </subcellularLocation>
</comment>
<comment type="induction">
    <text evidence="9">Expressed during hyphal growth.</text>
</comment>
<comment type="domain">
    <text evidence="1">The N-terminal myosin motor-like domain (MMD) does not seem to have motor activity but is indispensable for polarized cell wall synthesis via binding to actin that ensures the proper localization to the hyphal tips and septation sites near actin structures.</text>
</comment>
<comment type="disruption phenotype">
    <text evidence="10">Leads to reduced levels of mycelial chitin, periodic swellings along the length of hyphae, and a block in conidiation (PubMed:9126623). Does not affect virulence in a mouse model of pulmonary aspergillosis (PubMed:9126623).</text>
</comment>
<comment type="similarity">
    <text evidence="12">In the N-terminal section; belongs to the TRAFAC class myosin-kinesin ATPase superfamily. Myosin family.</text>
</comment>
<comment type="similarity">
    <text evidence="12">In the C-terminal section; belongs to the chitin synthase family. Class V subfamily.</text>
</comment>
<reference key="1">
    <citation type="journal article" date="1997" name="Fungal Genet. Biol.">
        <title>Aspergillus fumigatus chsE: a gene related to CHS3 of Saccharomyces cerevisiae and important for hyphal growth and conidiophore development but not pathogenicity.</title>
        <authorList>
            <person name="Aufauvre-Brown A."/>
            <person name="Mellado E."/>
            <person name="Gow N.A."/>
            <person name="Holden D.W."/>
        </authorList>
    </citation>
    <scope>NUCLEOTIDE SEQUENCE [GENOMIC DNA]</scope>
    <scope>FUNCTION</scope>
    <scope>DISRUPTION PHENOTYPE</scope>
    <source>
        <strain>H237</strain>
    </source>
</reference>
<reference key="2">
    <citation type="journal article" date="1995" name="Mol. Gen. Genet.">
        <title>A multigene family related to chitin synthase genes of yeast in the opportunistic pathogen Aspergillus fumigatus.</title>
        <authorList>
            <person name="Mellado E."/>
            <person name="Aufauvre-Brown A."/>
            <person name="Specht C.A."/>
            <person name="Robbins P.W."/>
            <person name="Holden D.W."/>
        </authorList>
    </citation>
    <scope>IDENTIFICATION</scope>
    <scope>INDUCTION</scope>
</reference>
<reference key="3">
    <citation type="journal article" date="2003" name="Fungal Genet. Biol.">
        <title>Cell wall biogenesis in a double chitin synthase mutant (chsG-/chsE-) of Aspergillus fumigatus.</title>
        <authorList>
            <person name="Mellado E."/>
            <person name="Dubreucq G."/>
            <person name="Mol P."/>
            <person name="Sarfati J."/>
            <person name="Paris S."/>
            <person name="Diaquin M."/>
            <person name="Holden D.W."/>
            <person name="Rodriguez-Tudela J.L."/>
            <person name="Latge J.P."/>
        </authorList>
    </citation>
    <scope>FUNCTION</scope>
</reference>
<gene>
    <name evidence="11" type="primary">chsE</name>
</gene>
<protein>
    <recommendedName>
        <fullName evidence="11">Chitin synthase E</fullName>
        <ecNumber evidence="14">2.4.1.16</ecNumber>
    </recommendedName>
    <alternativeName>
        <fullName evidence="12">Chitin-UDP acetyl-glucosaminyl transferase E</fullName>
    </alternativeName>
    <alternativeName>
        <fullName evidence="11">Class-V chitin synthase E</fullName>
    </alternativeName>
</protein>
<evidence type="ECO:0000250" key="1">
    <source>
        <dbReference type="UniProtKB" id="G5EB74"/>
    </source>
</evidence>
<evidence type="ECO:0000255" key="2"/>
<evidence type="ECO:0000255" key="3">
    <source>
        <dbReference type="PROSITE-ProRule" id="PRU00279"/>
    </source>
</evidence>
<evidence type="ECO:0000255" key="4">
    <source>
        <dbReference type="PROSITE-ProRule" id="PRU00498"/>
    </source>
</evidence>
<evidence type="ECO:0000255" key="5">
    <source>
        <dbReference type="PROSITE-ProRule" id="PRU00782"/>
    </source>
</evidence>
<evidence type="ECO:0000255" key="6">
    <source>
        <dbReference type="PROSITE-ProRule" id="PRU01342"/>
    </source>
</evidence>
<evidence type="ECO:0000256" key="7">
    <source>
        <dbReference type="SAM" id="MobiDB-lite"/>
    </source>
</evidence>
<evidence type="ECO:0000269" key="8">
    <source>
    </source>
</evidence>
<evidence type="ECO:0000269" key="9">
    <source>
    </source>
</evidence>
<evidence type="ECO:0000269" key="10">
    <source>
    </source>
</evidence>
<evidence type="ECO:0000303" key="11">
    <source>
    </source>
</evidence>
<evidence type="ECO:0000305" key="12"/>
<evidence type="ECO:0000305" key="13">
    <source>
    </source>
</evidence>
<evidence type="ECO:0000305" key="14">
    <source>
    </source>
</evidence>
<proteinExistence type="evidence at transcript level"/>
<organism>
    <name type="scientific">Aspergillus fumigatus</name>
    <name type="common">Neosartorya fumigata</name>
    <dbReference type="NCBI Taxonomy" id="746128"/>
    <lineage>
        <taxon>Eukaryota</taxon>
        <taxon>Fungi</taxon>
        <taxon>Dikarya</taxon>
        <taxon>Ascomycota</taxon>
        <taxon>Pezizomycotina</taxon>
        <taxon>Eurotiomycetes</taxon>
        <taxon>Eurotiomycetidae</taxon>
        <taxon>Eurotiales</taxon>
        <taxon>Aspergillaceae</taxon>
        <taxon>Aspergillus</taxon>
        <taxon>Aspergillus subgen. Fumigati</taxon>
    </lineage>
</organism>
<accession>P97995</accession>